<comment type="function">
    <text evidence="1">DNA-dependent RNA polymerase catalyzes the transcription of DNA into RNA using the four ribonucleoside triphosphates as substrates.</text>
</comment>
<comment type="catalytic activity">
    <reaction evidence="1">
        <text>RNA(n) + a ribonucleoside 5'-triphosphate = RNA(n+1) + diphosphate</text>
        <dbReference type="Rhea" id="RHEA:21248"/>
        <dbReference type="Rhea" id="RHEA-COMP:14527"/>
        <dbReference type="Rhea" id="RHEA-COMP:17342"/>
        <dbReference type="ChEBI" id="CHEBI:33019"/>
        <dbReference type="ChEBI" id="CHEBI:61557"/>
        <dbReference type="ChEBI" id="CHEBI:140395"/>
        <dbReference type="EC" id="2.7.7.6"/>
    </reaction>
</comment>
<comment type="subunit">
    <text evidence="1">The RNAP catalytic core consists of 2 alpha, 1 beta, 1 beta' and 1 omega subunit. When a sigma factor is associated with the core the holoenzyme is formed, which can initiate transcription.</text>
</comment>
<comment type="similarity">
    <text evidence="1">Belongs to the RNA polymerase beta chain family.</text>
</comment>
<feature type="chain" id="PRO_1000165814" description="DNA-directed RNA polymerase subunit beta">
    <location>
        <begin position="1"/>
        <end position="1178"/>
    </location>
</feature>
<feature type="region of interest" description="Disordered" evidence="2">
    <location>
        <begin position="1"/>
        <end position="37"/>
    </location>
</feature>
<feature type="compositionally biased region" description="Low complexity" evidence="2">
    <location>
        <begin position="17"/>
        <end position="33"/>
    </location>
</feature>
<reference key="1">
    <citation type="journal article" date="2009" name="Nat. Genet.">
        <title>Comparative genomic and phylogeographic analysis of Mycobacterium leprae.</title>
        <authorList>
            <person name="Monot M."/>
            <person name="Honore N."/>
            <person name="Garnier T."/>
            <person name="Zidane N."/>
            <person name="Sherafi D."/>
            <person name="Paniz-Mondolfi A."/>
            <person name="Matsuoka M."/>
            <person name="Taylor G.M."/>
            <person name="Donoghue H.D."/>
            <person name="Bouwman A."/>
            <person name="Mays S."/>
            <person name="Watson C."/>
            <person name="Lockwood D."/>
            <person name="Khamispour A."/>
            <person name="Dowlati Y."/>
            <person name="Jianping S."/>
            <person name="Rea T.H."/>
            <person name="Vera-Cabrera L."/>
            <person name="Stefani M.M."/>
            <person name="Banu S."/>
            <person name="Macdonald M."/>
            <person name="Sapkota B.R."/>
            <person name="Spencer J.S."/>
            <person name="Thomas J."/>
            <person name="Harshman K."/>
            <person name="Singh P."/>
            <person name="Busso P."/>
            <person name="Gattiker A."/>
            <person name="Rougemont J."/>
            <person name="Brennan P.J."/>
            <person name="Cole S.T."/>
        </authorList>
    </citation>
    <scope>NUCLEOTIDE SEQUENCE [LARGE SCALE GENOMIC DNA]</scope>
    <source>
        <strain>Br4923</strain>
    </source>
</reference>
<dbReference type="EC" id="2.7.7.6" evidence="1"/>
<dbReference type="EMBL" id="FM211192">
    <property type="protein sequence ID" value="CAR71987.1"/>
    <property type="molecule type" value="Genomic_DNA"/>
</dbReference>
<dbReference type="SMR" id="B8ZSC7"/>
<dbReference type="KEGG" id="mlb:MLBr01891"/>
<dbReference type="HOGENOM" id="CLU_000524_4_1_11"/>
<dbReference type="Proteomes" id="UP000006900">
    <property type="component" value="Chromosome"/>
</dbReference>
<dbReference type="GO" id="GO:0000428">
    <property type="term" value="C:DNA-directed RNA polymerase complex"/>
    <property type="evidence" value="ECO:0007669"/>
    <property type="project" value="UniProtKB-KW"/>
</dbReference>
<dbReference type="GO" id="GO:0003677">
    <property type="term" value="F:DNA binding"/>
    <property type="evidence" value="ECO:0007669"/>
    <property type="project" value="UniProtKB-UniRule"/>
</dbReference>
<dbReference type="GO" id="GO:0003899">
    <property type="term" value="F:DNA-directed RNA polymerase activity"/>
    <property type="evidence" value="ECO:0007669"/>
    <property type="project" value="UniProtKB-UniRule"/>
</dbReference>
<dbReference type="GO" id="GO:0032549">
    <property type="term" value="F:ribonucleoside binding"/>
    <property type="evidence" value="ECO:0007669"/>
    <property type="project" value="InterPro"/>
</dbReference>
<dbReference type="GO" id="GO:0006351">
    <property type="term" value="P:DNA-templated transcription"/>
    <property type="evidence" value="ECO:0007669"/>
    <property type="project" value="UniProtKB-UniRule"/>
</dbReference>
<dbReference type="CDD" id="cd00653">
    <property type="entry name" value="RNA_pol_B_RPB2"/>
    <property type="match status" value="1"/>
</dbReference>
<dbReference type="FunFam" id="3.90.1800.10:FF:000005">
    <property type="entry name" value="DNA-directed RNA polymerase subunit beta"/>
    <property type="match status" value="1"/>
</dbReference>
<dbReference type="Gene3D" id="2.40.50.100">
    <property type="match status" value="1"/>
</dbReference>
<dbReference type="Gene3D" id="2.40.50.150">
    <property type="match status" value="1"/>
</dbReference>
<dbReference type="Gene3D" id="3.90.1100.10">
    <property type="match status" value="1"/>
</dbReference>
<dbReference type="Gene3D" id="2.30.150.10">
    <property type="entry name" value="DNA-directed RNA polymerase, beta subunit, external 1 domain"/>
    <property type="match status" value="1"/>
</dbReference>
<dbReference type="Gene3D" id="2.40.270.10">
    <property type="entry name" value="DNA-directed RNA polymerase, subunit 2, domain 6"/>
    <property type="match status" value="1"/>
</dbReference>
<dbReference type="Gene3D" id="3.90.1800.10">
    <property type="entry name" value="RNA polymerase alpha subunit dimerisation domain"/>
    <property type="match status" value="1"/>
</dbReference>
<dbReference type="Gene3D" id="3.90.1110.10">
    <property type="entry name" value="RNA polymerase Rpb2, domain 2"/>
    <property type="match status" value="1"/>
</dbReference>
<dbReference type="HAMAP" id="MF_01321">
    <property type="entry name" value="RNApol_bact_RpoB"/>
    <property type="match status" value="1"/>
</dbReference>
<dbReference type="InterPro" id="IPR042107">
    <property type="entry name" value="DNA-dir_RNA_pol_bsu_ext_1_sf"/>
</dbReference>
<dbReference type="InterPro" id="IPR019462">
    <property type="entry name" value="DNA-dir_RNA_pol_bsu_external_1"/>
</dbReference>
<dbReference type="InterPro" id="IPR015712">
    <property type="entry name" value="DNA-dir_RNA_pol_su2"/>
</dbReference>
<dbReference type="InterPro" id="IPR007120">
    <property type="entry name" value="DNA-dir_RNAP_su2_dom"/>
</dbReference>
<dbReference type="InterPro" id="IPR037033">
    <property type="entry name" value="DNA-dir_RNAP_su2_hyb_sf"/>
</dbReference>
<dbReference type="InterPro" id="IPR010243">
    <property type="entry name" value="RNA_pol_bsu_bac"/>
</dbReference>
<dbReference type="InterPro" id="IPR007121">
    <property type="entry name" value="RNA_pol_bsu_CS"/>
</dbReference>
<dbReference type="InterPro" id="IPR007644">
    <property type="entry name" value="RNA_pol_bsu_protrusion"/>
</dbReference>
<dbReference type="InterPro" id="IPR007642">
    <property type="entry name" value="RNA_pol_Rpb2_2"/>
</dbReference>
<dbReference type="InterPro" id="IPR037034">
    <property type="entry name" value="RNA_pol_Rpb2_2_sf"/>
</dbReference>
<dbReference type="InterPro" id="IPR007645">
    <property type="entry name" value="RNA_pol_Rpb2_3"/>
</dbReference>
<dbReference type="InterPro" id="IPR007641">
    <property type="entry name" value="RNA_pol_Rpb2_7"/>
</dbReference>
<dbReference type="InterPro" id="IPR014724">
    <property type="entry name" value="RNA_pol_RPB2_OB-fold"/>
</dbReference>
<dbReference type="NCBIfam" id="NF001616">
    <property type="entry name" value="PRK00405.1"/>
    <property type="match status" value="1"/>
</dbReference>
<dbReference type="NCBIfam" id="TIGR02013">
    <property type="entry name" value="rpoB"/>
    <property type="match status" value="1"/>
</dbReference>
<dbReference type="PANTHER" id="PTHR20856">
    <property type="entry name" value="DNA-DIRECTED RNA POLYMERASE I SUBUNIT 2"/>
    <property type="match status" value="1"/>
</dbReference>
<dbReference type="Pfam" id="PF04563">
    <property type="entry name" value="RNA_pol_Rpb2_1"/>
    <property type="match status" value="1"/>
</dbReference>
<dbReference type="Pfam" id="PF04561">
    <property type="entry name" value="RNA_pol_Rpb2_2"/>
    <property type="match status" value="1"/>
</dbReference>
<dbReference type="Pfam" id="PF04565">
    <property type="entry name" value="RNA_pol_Rpb2_3"/>
    <property type="match status" value="1"/>
</dbReference>
<dbReference type="Pfam" id="PF10385">
    <property type="entry name" value="RNA_pol_Rpb2_45"/>
    <property type="match status" value="1"/>
</dbReference>
<dbReference type="Pfam" id="PF00562">
    <property type="entry name" value="RNA_pol_Rpb2_6"/>
    <property type="match status" value="1"/>
</dbReference>
<dbReference type="Pfam" id="PF04560">
    <property type="entry name" value="RNA_pol_Rpb2_7"/>
    <property type="match status" value="1"/>
</dbReference>
<dbReference type="SUPFAM" id="SSF64484">
    <property type="entry name" value="beta and beta-prime subunits of DNA dependent RNA-polymerase"/>
    <property type="match status" value="1"/>
</dbReference>
<dbReference type="PROSITE" id="PS01166">
    <property type="entry name" value="RNA_POL_BETA"/>
    <property type="match status" value="1"/>
</dbReference>
<name>RPOB_MYCLB</name>
<sequence>MLEGCILPDFGQSKTDVSPSQSRPQSSPNNSVPGAPNRISFAKLREPLEVPGLLDVQTDSFEWLIGSPCWRAAAASRGDLKPVGGLEEVLYELSPIEDFSGSMSLSFSDPRFDEVKAPVEECKDKDMTYAAPLFVTAEFINNNTGEIKSQTVFMGDFPMMTEKGTFIINGTERVVVSQLVRSPGVYFDETIDKSTEKTLHSVKVIPSRGAWLEFDVDKRDTVGVRIDRKRRQPVTVLLKALGWTSEQITERFGFSEIMRSTLEKDNTVGTDEALLDIYRKLRPGEPPTKESAQTLLENLFFKEKRYDLARVGRYKVNKKLGLHAGELITSSTLTEEDVVATIEYLVRLHEGQSTMTVPGGVEVPVETDDIDHFGNRRLRTVGELIQNQIRVGMSRMERVVRERMTTQDVEAITPQTLINIRPVVAAIKEFFGTSQLSQFMDQNNPLSGLTHKRRLSALGPGGLSRERAGLEVRDVHPSHYGRMCPIETPEGPNIGLIGSLSVYARVNPFGFIETPYRKVVDGVVSDEIEYLTADEEDRHVVAQANSPIDEAGRFLEPRVLVRRKAGEVEYVASSEVDYMDVSPRQMVSVATAMIPFLEHDDANRALMGANMQRQAVPLVRSEAPLVGTGMELRAAIDAGHVVVAEKSGVIEEVSADYITVMADDGTRRTYRMRKFARSNHGTCANQSPIVDAGDRVEAGQVIADGPCTENGEMALGKNLLVAIMPWEGHNYEDAIILSNRLVEEDVLTSIHIEEHEIDARDTKLGAEEITRDIPNVSDEVLADLDERGIVRIGAEVRDGDILVGKVTPKGETELTPEERLLRAIFGEKAREVRDTSLKVPHGESGKVIGIRVFSHEDDDELPAGVNELVRVYVAQKRKISDGDKLAGRHGNKGVIGKILPAEDMPFLPDGTPVDIILNTHGVPRRMNVGQILETHLGWVAKSGWKIDVAGGIPDWAVNLPEELLHAAPNQIVSTPVFDGAKEEELQGLLSSTLPNRDGDVMVGGDGKAVLFDGRSGEPFPYPVTVGYMYIMKLHHLVDDKIHARSTGPYSMITQQPLGGKAQFGGQRFGEMECWAMQAYGAAYTLQELLTIKSDDTVGRVKVYEAIVKGENIPEPGIPESFKVLLKELQSLCLNVEVLSSDGAAIELREGEDEDLERAAANLGINLSRNESASIEDLA</sequence>
<keyword id="KW-0240">DNA-directed RNA polymerase</keyword>
<keyword id="KW-0548">Nucleotidyltransferase</keyword>
<keyword id="KW-0804">Transcription</keyword>
<keyword id="KW-0808">Transferase</keyword>
<evidence type="ECO:0000255" key="1">
    <source>
        <dbReference type="HAMAP-Rule" id="MF_01321"/>
    </source>
</evidence>
<evidence type="ECO:0000256" key="2">
    <source>
        <dbReference type="SAM" id="MobiDB-lite"/>
    </source>
</evidence>
<proteinExistence type="inferred from homology"/>
<gene>
    <name evidence="1" type="primary">rpoB</name>
    <name type="ordered locus">MLBr01891</name>
</gene>
<protein>
    <recommendedName>
        <fullName evidence="1">DNA-directed RNA polymerase subunit beta</fullName>
        <shortName evidence="1">RNAP subunit beta</shortName>
        <ecNumber evidence="1">2.7.7.6</ecNumber>
    </recommendedName>
    <alternativeName>
        <fullName evidence="1">RNA polymerase subunit beta</fullName>
    </alternativeName>
    <alternativeName>
        <fullName evidence="1">Transcriptase subunit beta</fullName>
    </alternativeName>
</protein>
<accession>B8ZSC7</accession>
<organism>
    <name type="scientific">Mycobacterium leprae (strain Br4923)</name>
    <dbReference type="NCBI Taxonomy" id="561304"/>
    <lineage>
        <taxon>Bacteria</taxon>
        <taxon>Bacillati</taxon>
        <taxon>Actinomycetota</taxon>
        <taxon>Actinomycetes</taxon>
        <taxon>Mycobacteriales</taxon>
        <taxon>Mycobacteriaceae</taxon>
        <taxon>Mycobacterium</taxon>
    </lineage>
</organism>